<protein>
    <recommendedName>
        <fullName>Autophagy-related protein 21</fullName>
    </recommendedName>
</protein>
<gene>
    <name type="primary">ATG21</name>
    <name type="ordered locus">KLLA0E24354g</name>
</gene>
<evidence type="ECO:0000250" key="1"/>
<evidence type="ECO:0000250" key="2">
    <source>
        <dbReference type="UniProtKB" id="Q02887"/>
    </source>
</evidence>
<evidence type="ECO:0000305" key="3"/>
<feature type="chain" id="PRO_0000050879" description="Autophagy-related protein 21">
    <location>
        <begin position="1"/>
        <end position="392"/>
    </location>
</feature>
<feature type="repeat" description="WD 1">
    <location>
        <begin position="200"/>
        <end position="240"/>
    </location>
</feature>
<feature type="repeat" description="WD 2">
    <location>
        <begin position="250"/>
        <end position="289"/>
    </location>
</feature>
<feature type="short sequence motif" description="L/FRRG motif" evidence="2">
    <location>
        <begin position="246"/>
        <end position="250"/>
    </location>
</feature>
<keyword id="KW-0002">3D-structure</keyword>
<keyword id="KW-0072">Autophagy</keyword>
<keyword id="KW-0963">Cytoplasm</keyword>
<keyword id="KW-0472">Membrane</keyword>
<keyword id="KW-0653">Protein transport</keyword>
<keyword id="KW-1185">Reference proteome</keyword>
<keyword id="KW-0677">Repeat</keyword>
<keyword id="KW-0813">Transport</keyword>
<keyword id="KW-0926">Vacuole</keyword>
<keyword id="KW-0853">WD repeat</keyword>
<name>ATG21_KLULA</name>
<reference key="1">
    <citation type="journal article" date="2004" name="Nature">
        <title>Genome evolution in yeasts.</title>
        <authorList>
            <person name="Dujon B."/>
            <person name="Sherman D."/>
            <person name="Fischer G."/>
            <person name="Durrens P."/>
            <person name="Casaregola S."/>
            <person name="Lafontaine I."/>
            <person name="de Montigny J."/>
            <person name="Marck C."/>
            <person name="Neuveglise C."/>
            <person name="Talla E."/>
            <person name="Goffard N."/>
            <person name="Frangeul L."/>
            <person name="Aigle M."/>
            <person name="Anthouard V."/>
            <person name="Babour A."/>
            <person name="Barbe V."/>
            <person name="Barnay S."/>
            <person name="Blanchin S."/>
            <person name="Beckerich J.-M."/>
            <person name="Beyne E."/>
            <person name="Bleykasten C."/>
            <person name="Boisrame A."/>
            <person name="Boyer J."/>
            <person name="Cattolico L."/>
            <person name="Confanioleri F."/>
            <person name="de Daruvar A."/>
            <person name="Despons L."/>
            <person name="Fabre E."/>
            <person name="Fairhead C."/>
            <person name="Ferry-Dumazet H."/>
            <person name="Groppi A."/>
            <person name="Hantraye F."/>
            <person name="Hennequin C."/>
            <person name="Jauniaux N."/>
            <person name="Joyet P."/>
            <person name="Kachouri R."/>
            <person name="Kerrest A."/>
            <person name="Koszul R."/>
            <person name="Lemaire M."/>
            <person name="Lesur I."/>
            <person name="Ma L."/>
            <person name="Muller H."/>
            <person name="Nicaud J.-M."/>
            <person name="Nikolski M."/>
            <person name="Oztas S."/>
            <person name="Ozier-Kalogeropoulos O."/>
            <person name="Pellenz S."/>
            <person name="Potier S."/>
            <person name="Richard G.-F."/>
            <person name="Straub M.-L."/>
            <person name="Suleau A."/>
            <person name="Swennen D."/>
            <person name="Tekaia F."/>
            <person name="Wesolowski-Louvel M."/>
            <person name="Westhof E."/>
            <person name="Wirth B."/>
            <person name="Zeniou-Meyer M."/>
            <person name="Zivanovic Y."/>
            <person name="Bolotin-Fukuhara M."/>
            <person name="Thierry A."/>
            <person name="Bouchier C."/>
            <person name="Caudron B."/>
            <person name="Scarpelli C."/>
            <person name="Gaillardin C."/>
            <person name="Weissenbach J."/>
            <person name="Wincker P."/>
            <person name="Souciet J.-L."/>
        </authorList>
    </citation>
    <scope>NUCLEOTIDE SEQUENCE [LARGE SCALE GENOMIC DNA]</scope>
    <source>
        <strain>ATCC 8585 / CBS 2359 / DSM 70799 / NBRC 1267 / NRRL Y-1140 / WM37</strain>
    </source>
</reference>
<proteinExistence type="evidence at protein level"/>
<comment type="function">
    <text evidence="1">Required for cytoplasm to vacuole transport (Cvt) vesicles formation and mitophagy. Involved in binding of phosphatidylethanolamine to ATG8 and in recruitment of ATG8 and ATG5 to the pre-autophagosomal structure. Protects ATG8 from ARG4-mediated cleavage (By similarity).</text>
</comment>
<comment type="subcellular location">
    <subcellularLocation>
        <location evidence="1">Cytoplasm</location>
    </subcellularLocation>
    <subcellularLocation>
        <location evidence="1">Membrane</location>
        <topology evidence="1">Peripheral membrane protein</topology>
    </subcellularLocation>
    <subcellularLocation>
        <location evidence="1">Vacuole membrane</location>
        <topology evidence="1">Peripheral membrane protein</topology>
    </subcellularLocation>
    <text evidence="1">Vacuolar and perivacuolar punctate structures.</text>
</comment>
<comment type="domain">
    <text evidence="1">Contains a beta-propeller domain involved in specific binding to phosphatidylinositol 3,5-bisphosphate (PIP2).</text>
</comment>
<comment type="domain">
    <text evidence="2">The L/FRRG motif is essential for the cytoplasm to vacuole transport (Cvt) pathway and for the recruitment of ATG8 and ATG16 to the PAS in nutrient-rich medium and in both its recruitment to and dissociation from the PAS under starvation conditions.</text>
</comment>
<comment type="similarity">
    <text evidence="3">Belongs to the WD repeat PROPPIN family.</text>
</comment>
<organism>
    <name type="scientific">Kluyveromyces lactis (strain ATCC 8585 / CBS 2359 / DSM 70799 / NBRC 1267 / NRRL Y-1140 / WM37)</name>
    <name type="common">Yeast</name>
    <name type="synonym">Candida sphaerica</name>
    <dbReference type="NCBI Taxonomy" id="284590"/>
    <lineage>
        <taxon>Eukaryota</taxon>
        <taxon>Fungi</taxon>
        <taxon>Dikarya</taxon>
        <taxon>Ascomycota</taxon>
        <taxon>Saccharomycotina</taxon>
        <taxon>Saccharomycetes</taxon>
        <taxon>Saccharomycetales</taxon>
        <taxon>Saccharomycetaceae</taxon>
        <taxon>Kluyveromyces</taxon>
    </lineage>
</organism>
<sequence>MALKLLGFNQDATCFSVISSNKGVTIYNCDPFGKCFELEKSTSNDEELDFLVEMLFSTSLIAVVDKTIGASKRKKLKIVNTKRKATICELTFPHEIMDVIMNRKIICVVLKSDQIFVYDISCMKLLRTIDVRGEKLKSTSKFRNSEAVGDIGVRVSLSTDNNSILCYSSYSKSDKENAPLNDIVVFDALKCIQINVLPAVHQSNIVCIACSPDGMLMATASEKGTIIRVFKTIDTENDEPILVNEFRRGSRPSRISEMKFNHDNTLLACVGESDTIHIFALPVTTTEADANEDDTLQQSSHSLSSSINGLQYISKGLANRFGKIIVSKIPTQSQQRHVAYIKIPENAKYRIGFPKDTTNTIHICGEDGNYLVYSIPRNEVGPCTLVKSNTFD</sequence>
<dbReference type="EMBL" id="CR382125">
    <property type="protein sequence ID" value="CAH00134.1"/>
    <property type="molecule type" value="Genomic_DNA"/>
</dbReference>
<dbReference type="RefSeq" id="XP_455047.1">
    <property type="nucleotide sequence ID" value="XM_455047.1"/>
</dbReference>
<dbReference type="PDB" id="6RGO">
    <property type="method" value="X-ray"/>
    <property type="resolution" value="3.70 A"/>
    <property type="chains" value="A/B=1-392"/>
</dbReference>
<dbReference type="PDBsum" id="6RGO"/>
<dbReference type="SMR" id="Q6CLZ2"/>
<dbReference type="FunCoup" id="Q6CLZ2">
    <property type="interactions" value="22"/>
</dbReference>
<dbReference type="STRING" id="284590.Q6CLZ2"/>
<dbReference type="PaxDb" id="284590-Q6CLZ2"/>
<dbReference type="KEGG" id="kla:KLLA0_E24333g"/>
<dbReference type="eggNOG" id="KOG2110">
    <property type="taxonomic scope" value="Eukaryota"/>
</dbReference>
<dbReference type="HOGENOM" id="CLU_025895_5_2_1"/>
<dbReference type="InParanoid" id="Q6CLZ2"/>
<dbReference type="OMA" id="MNRKRMC"/>
<dbReference type="Proteomes" id="UP000000598">
    <property type="component" value="Chromosome E"/>
</dbReference>
<dbReference type="GO" id="GO:0005774">
    <property type="term" value="C:vacuolar membrane"/>
    <property type="evidence" value="ECO:0007669"/>
    <property type="project" value="UniProtKB-SubCell"/>
</dbReference>
<dbReference type="GO" id="GO:0006914">
    <property type="term" value="P:autophagy"/>
    <property type="evidence" value="ECO:0007669"/>
    <property type="project" value="UniProtKB-KW"/>
</dbReference>
<dbReference type="GO" id="GO:0015031">
    <property type="term" value="P:protein transport"/>
    <property type="evidence" value="ECO:0007669"/>
    <property type="project" value="UniProtKB-KW"/>
</dbReference>
<dbReference type="Gene3D" id="2.130.10.10">
    <property type="entry name" value="YVTN repeat-like/Quinoprotein amine dehydrogenase"/>
    <property type="match status" value="1"/>
</dbReference>
<dbReference type="InterPro" id="IPR048720">
    <property type="entry name" value="PROPPIN"/>
</dbReference>
<dbReference type="InterPro" id="IPR015943">
    <property type="entry name" value="WD40/YVTN_repeat-like_dom_sf"/>
</dbReference>
<dbReference type="InterPro" id="IPR036322">
    <property type="entry name" value="WD40_repeat_dom_sf"/>
</dbReference>
<dbReference type="InterPro" id="IPR001680">
    <property type="entry name" value="WD40_rpt"/>
</dbReference>
<dbReference type="PANTHER" id="PTHR11227">
    <property type="entry name" value="WD-REPEAT PROTEIN INTERACTING WITH PHOSPHOINOSIDES WIPI -RELATED"/>
    <property type="match status" value="1"/>
</dbReference>
<dbReference type="Pfam" id="PF21032">
    <property type="entry name" value="PROPPIN"/>
    <property type="match status" value="1"/>
</dbReference>
<dbReference type="SMART" id="SM00320">
    <property type="entry name" value="WD40"/>
    <property type="match status" value="2"/>
</dbReference>
<dbReference type="SUPFAM" id="SSF50978">
    <property type="entry name" value="WD40 repeat-like"/>
    <property type="match status" value="1"/>
</dbReference>
<accession>Q6CLZ2</accession>